<proteinExistence type="inferred from homology"/>
<name>UBIG_CHRVO</name>
<keyword id="KW-0489">Methyltransferase</keyword>
<keyword id="KW-1185">Reference proteome</keyword>
<keyword id="KW-0949">S-adenosyl-L-methionine</keyword>
<keyword id="KW-0808">Transferase</keyword>
<keyword id="KW-0831">Ubiquinone biosynthesis</keyword>
<accession>Q7NZ91</accession>
<organism>
    <name type="scientific">Chromobacterium violaceum (strain ATCC 12472 / DSM 30191 / JCM 1249 / CCUG 213 / NBRC 12614 / NCIMB 9131 / NCTC 9757 / MK)</name>
    <dbReference type="NCBI Taxonomy" id="243365"/>
    <lineage>
        <taxon>Bacteria</taxon>
        <taxon>Pseudomonadati</taxon>
        <taxon>Pseudomonadota</taxon>
        <taxon>Betaproteobacteria</taxon>
        <taxon>Neisseriales</taxon>
        <taxon>Chromobacteriaceae</taxon>
        <taxon>Chromobacterium</taxon>
    </lineage>
</organism>
<dbReference type="EC" id="2.1.1.222" evidence="1"/>
<dbReference type="EC" id="2.1.1.64" evidence="1"/>
<dbReference type="EMBL" id="AE016825">
    <property type="protein sequence ID" value="AAQ58706.1"/>
    <property type="molecule type" value="Genomic_DNA"/>
</dbReference>
<dbReference type="RefSeq" id="WP_011134586.1">
    <property type="nucleotide sequence ID" value="NC_005085.1"/>
</dbReference>
<dbReference type="SMR" id="Q7NZ91"/>
<dbReference type="STRING" id="243365.CV_1031"/>
<dbReference type="GeneID" id="66366731"/>
<dbReference type="KEGG" id="cvi:CV_1031"/>
<dbReference type="eggNOG" id="COG2227">
    <property type="taxonomic scope" value="Bacteria"/>
</dbReference>
<dbReference type="HOGENOM" id="CLU_042432_5_0_4"/>
<dbReference type="OrthoDB" id="9801538at2"/>
<dbReference type="UniPathway" id="UPA00232"/>
<dbReference type="Proteomes" id="UP000001424">
    <property type="component" value="Chromosome"/>
</dbReference>
<dbReference type="GO" id="GO:0102208">
    <property type="term" value="F:2-polyprenyl-6-hydroxyphenol methylase activity"/>
    <property type="evidence" value="ECO:0007669"/>
    <property type="project" value="UniProtKB-EC"/>
</dbReference>
<dbReference type="GO" id="GO:0061542">
    <property type="term" value="F:3-demethylubiquinol 3-O-methyltransferase activity"/>
    <property type="evidence" value="ECO:0007669"/>
    <property type="project" value="UniProtKB-UniRule"/>
</dbReference>
<dbReference type="GO" id="GO:0010420">
    <property type="term" value="F:polyprenyldihydroxybenzoate methyltransferase activity"/>
    <property type="evidence" value="ECO:0007669"/>
    <property type="project" value="InterPro"/>
</dbReference>
<dbReference type="GO" id="GO:0032259">
    <property type="term" value="P:methylation"/>
    <property type="evidence" value="ECO:0007669"/>
    <property type="project" value="UniProtKB-KW"/>
</dbReference>
<dbReference type="CDD" id="cd02440">
    <property type="entry name" value="AdoMet_MTases"/>
    <property type="match status" value="1"/>
</dbReference>
<dbReference type="FunFam" id="3.40.50.150:FF:000028">
    <property type="entry name" value="Ubiquinone biosynthesis O-methyltransferase"/>
    <property type="match status" value="1"/>
</dbReference>
<dbReference type="Gene3D" id="3.40.50.150">
    <property type="entry name" value="Vaccinia Virus protein VP39"/>
    <property type="match status" value="1"/>
</dbReference>
<dbReference type="HAMAP" id="MF_00472">
    <property type="entry name" value="UbiG"/>
    <property type="match status" value="1"/>
</dbReference>
<dbReference type="InterPro" id="IPR029063">
    <property type="entry name" value="SAM-dependent_MTases_sf"/>
</dbReference>
<dbReference type="InterPro" id="IPR010233">
    <property type="entry name" value="UbiG_MeTrfase"/>
</dbReference>
<dbReference type="NCBIfam" id="TIGR01983">
    <property type="entry name" value="UbiG"/>
    <property type="match status" value="1"/>
</dbReference>
<dbReference type="PANTHER" id="PTHR43464">
    <property type="entry name" value="METHYLTRANSFERASE"/>
    <property type="match status" value="1"/>
</dbReference>
<dbReference type="PANTHER" id="PTHR43464:SF19">
    <property type="entry name" value="UBIQUINONE BIOSYNTHESIS O-METHYLTRANSFERASE, MITOCHONDRIAL"/>
    <property type="match status" value="1"/>
</dbReference>
<dbReference type="Pfam" id="PF13489">
    <property type="entry name" value="Methyltransf_23"/>
    <property type="match status" value="1"/>
</dbReference>
<dbReference type="SUPFAM" id="SSF53335">
    <property type="entry name" value="S-adenosyl-L-methionine-dependent methyltransferases"/>
    <property type="match status" value="1"/>
</dbReference>
<protein>
    <recommendedName>
        <fullName evidence="1">Ubiquinone biosynthesis O-methyltransferase</fullName>
    </recommendedName>
    <alternativeName>
        <fullName evidence="1">2-polyprenyl-6-hydroxyphenol methylase</fullName>
        <ecNumber evidence="1">2.1.1.222</ecNumber>
    </alternativeName>
    <alternativeName>
        <fullName evidence="1">3-demethylubiquinone 3-O-methyltransferase</fullName>
        <ecNumber evidence="1">2.1.1.64</ecNumber>
    </alternativeName>
</protein>
<sequence length="232" mass="25507">MSNVDELEIDKFSQLAHKWWDKDSEFKPLHEINPLRLDFIDRHASIAGKKVLDVGCGGGILAESMALRGAQVTGIDLAKKSLKVAQLHSLESGVPIDYRCVAVEDLAAEMPGAFDAVTCMEMLEHVPDPESVVRACSTLVKPGGWVFFSTLNRNAKAYLLAVVGAEYVLNMLPRGTHEYARFLKPSELGRMARHAGLGLQTLSGMGYNPVTRIYSLNDDTAVNYLMATRRAD</sequence>
<evidence type="ECO:0000255" key="1">
    <source>
        <dbReference type="HAMAP-Rule" id="MF_00472"/>
    </source>
</evidence>
<reference key="1">
    <citation type="journal article" date="2003" name="Proc. Natl. Acad. Sci. U.S.A.">
        <title>The complete genome sequence of Chromobacterium violaceum reveals remarkable and exploitable bacterial adaptability.</title>
        <authorList>
            <person name="Vasconcelos A.T.R."/>
            <person name="de Almeida D.F."/>
            <person name="Hungria M."/>
            <person name="Guimaraes C.T."/>
            <person name="Antonio R.V."/>
            <person name="Almeida F.C."/>
            <person name="de Almeida L.G.P."/>
            <person name="de Almeida R."/>
            <person name="Alves-Gomes J.A."/>
            <person name="Andrade E.M."/>
            <person name="Araripe J."/>
            <person name="de Araujo M.F.F."/>
            <person name="Astolfi-Filho S."/>
            <person name="Azevedo V."/>
            <person name="Baptista A.J."/>
            <person name="Bataus L.A.M."/>
            <person name="Batista J.S."/>
            <person name="Belo A."/>
            <person name="van den Berg C."/>
            <person name="Bogo M."/>
            <person name="Bonatto S."/>
            <person name="Bordignon J."/>
            <person name="Brigido M.M."/>
            <person name="Brito C.A."/>
            <person name="Brocchi M."/>
            <person name="Burity H.A."/>
            <person name="Camargo A.A."/>
            <person name="Cardoso D.D.P."/>
            <person name="Carneiro N.P."/>
            <person name="Carraro D.M."/>
            <person name="Carvalho C.M.B."/>
            <person name="Cascardo J.C.M."/>
            <person name="Cavada B.S."/>
            <person name="Chueire L.M.O."/>
            <person name="Creczynski-Pasa T.B."/>
            <person name="Cunha-Junior N.C."/>
            <person name="Fagundes N."/>
            <person name="Falcao C.L."/>
            <person name="Fantinatti F."/>
            <person name="Farias I.P."/>
            <person name="Felipe M.S.S."/>
            <person name="Ferrari L.P."/>
            <person name="Ferro J.A."/>
            <person name="Ferro M.I.T."/>
            <person name="Franco G.R."/>
            <person name="Freitas N.S.A."/>
            <person name="Furlan L.R."/>
            <person name="Gazzinelli R.T."/>
            <person name="Gomes E.A."/>
            <person name="Goncalves P.R."/>
            <person name="Grangeiro T.B."/>
            <person name="Grattapaglia D."/>
            <person name="Grisard E.C."/>
            <person name="Hanna E.S."/>
            <person name="Jardim S.N."/>
            <person name="Laurino J."/>
            <person name="Leoi L.C.T."/>
            <person name="Lima L.F.A."/>
            <person name="Loureiro M.F."/>
            <person name="Lyra M.C.C.P."/>
            <person name="Madeira H.M.F."/>
            <person name="Manfio G.P."/>
            <person name="Maranhao A.Q."/>
            <person name="Martins W.S."/>
            <person name="di Mauro S.M.Z."/>
            <person name="de Medeiros S.R.B."/>
            <person name="Meissner R.V."/>
            <person name="Moreira M.A.M."/>
            <person name="Nascimento F.F."/>
            <person name="Nicolas M.F."/>
            <person name="Oliveira J.G."/>
            <person name="Oliveira S.C."/>
            <person name="Paixao R.F.C."/>
            <person name="Parente J.A."/>
            <person name="Pedrosa F.O."/>
            <person name="Pena S.D.J."/>
            <person name="Pereira J.O."/>
            <person name="Pereira M."/>
            <person name="Pinto L.S.R.C."/>
            <person name="Pinto L.S."/>
            <person name="Porto J.I.R."/>
            <person name="Potrich D.P."/>
            <person name="Ramalho-Neto C.E."/>
            <person name="Reis A.M.M."/>
            <person name="Rigo L.U."/>
            <person name="Rondinelli E."/>
            <person name="Santos E.B.P."/>
            <person name="Santos F.R."/>
            <person name="Schneider M.P.C."/>
            <person name="Seuanez H.N."/>
            <person name="Silva A.M.R."/>
            <person name="da Silva A.L.C."/>
            <person name="Silva D.W."/>
            <person name="Silva R."/>
            <person name="Simoes I.C."/>
            <person name="Simon D."/>
            <person name="Soares C.M.A."/>
            <person name="Soares R.B.A."/>
            <person name="Souza E.M."/>
            <person name="Souza K.R.L."/>
            <person name="Souza R.C."/>
            <person name="Steffens M.B.R."/>
            <person name="Steindel M."/>
            <person name="Teixeira S.R."/>
            <person name="Urmenyi T."/>
            <person name="Vettore A."/>
            <person name="Wassem R."/>
            <person name="Zaha A."/>
            <person name="Simpson A.J.G."/>
        </authorList>
    </citation>
    <scope>NUCLEOTIDE SEQUENCE [LARGE SCALE GENOMIC DNA]</scope>
    <source>
        <strain>ATCC 12472 / DSM 30191 / JCM 1249 / CCUG 213 / NBRC 12614 / NCIMB 9131 / NCTC 9757 / MK</strain>
    </source>
</reference>
<comment type="function">
    <text evidence="1">O-methyltransferase that catalyzes the 2 O-methylation steps in the ubiquinone biosynthetic pathway.</text>
</comment>
<comment type="catalytic activity">
    <reaction evidence="1">
        <text>a 3-demethylubiquinol + S-adenosyl-L-methionine = a ubiquinol + S-adenosyl-L-homocysteine + H(+)</text>
        <dbReference type="Rhea" id="RHEA:44380"/>
        <dbReference type="Rhea" id="RHEA-COMP:9566"/>
        <dbReference type="Rhea" id="RHEA-COMP:10914"/>
        <dbReference type="ChEBI" id="CHEBI:15378"/>
        <dbReference type="ChEBI" id="CHEBI:17976"/>
        <dbReference type="ChEBI" id="CHEBI:57856"/>
        <dbReference type="ChEBI" id="CHEBI:59789"/>
        <dbReference type="ChEBI" id="CHEBI:84422"/>
        <dbReference type="EC" id="2.1.1.64"/>
    </reaction>
</comment>
<comment type="catalytic activity">
    <reaction evidence="1">
        <text>a 3-(all-trans-polyprenyl)benzene-1,2-diol + S-adenosyl-L-methionine = a 2-methoxy-6-(all-trans-polyprenyl)phenol + S-adenosyl-L-homocysteine + H(+)</text>
        <dbReference type="Rhea" id="RHEA:31411"/>
        <dbReference type="Rhea" id="RHEA-COMP:9550"/>
        <dbReference type="Rhea" id="RHEA-COMP:9551"/>
        <dbReference type="ChEBI" id="CHEBI:15378"/>
        <dbReference type="ChEBI" id="CHEBI:57856"/>
        <dbReference type="ChEBI" id="CHEBI:59789"/>
        <dbReference type="ChEBI" id="CHEBI:62729"/>
        <dbReference type="ChEBI" id="CHEBI:62731"/>
        <dbReference type="EC" id="2.1.1.222"/>
    </reaction>
</comment>
<comment type="pathway">
    <text evidence="1">Cofactor biosynthesis; ubiquinone biosynthesis.</text>
</comment>
<comment type="similarity">
    <text evidence="1">Belongs to the methyltransferase superfamily. UbiG/COQ3 family.</text>
</comment>
<feature type="chain" id="PRO_0000193377" description="Ubiquinone biosynthesis O-methyltransferase">
    <location>
        <begin position="1"/>
        <end position="232"/>
    </location>
</feature>
<feature type="binding site" evidence="1">
    <location>
        <position position="36"/>
    </location>
    <ligand>
        <name>S-adenosyl-L-methionine</name>
        <dbReference type="ChEBI" id="CHEBI:59789"/>
    </ligand>
</feature>
<feature type="binding site" evidence="1">
    <location>
        <position position="55"/>
    </location>
    <ligand>
        <name>S-adenosyl-L-methionine</name>
        <dbReference type="ChEBI" id="CHEBI:59789"/>
    </ligand>
</feature>
<feature type="binding site" evidence="1">
    <location>
        <position position="76"/>
    </location>
    <ligand>
        <name>S-adenosyl-L-methionine</name>
        <dbReference type="ChEBI" id="CHEBI:59789"/>
    </ligand>
</feature>
<feature type="binding site" evidence="1">
    <location>
        <position position="120"/>
    </location>
    <ligand>
        <name>S-adenosyl-L-methionine</name>
        <dbReference type="ChEBI" id="CHEBI:59789"/>
    </ligand>
</feature>
<gene>
    <name evidence="1" type="primary">ubiG</name>
    <name type="ordered locus">CV_1031</name>
</gene>